<feature type="chain" id="PRO_1000117671" description="ATP phosphoribosyltransferase regulatory subunit">
    <location>
        <begin position="1"/>
        <end position="420"/>
    </location>
</feature>
<comment type="function">
    <text evidence="1">Required for the first step of histidine biosynthesis. May allow the feedback regulation of ATP phosphoribosyltransferase activity by histidine.</text>
</comment>
<comment type="pathway">
    <text evidence="1">Amino-acid biosynthesis; L-histidine biosynthesis; L-histidine from 5-phospho-alpha-D-ribose 1-diphosphate: step 1/9.</text>
</comment>
<comment type="subunit">
    <text evidence="1">Heteromultimer composed of HisG and HisZ subunits.</text>
</comment>
<comment type="subcellular location">
    <subcellularLocation>
        <location evidence="1">Cytoplasm</location>
    </subcellularLocation>
</comment>
<comment type="miscellaneous">
    <text>This function is generally fulfilled by the C-terminal part of HisG, which is missing in some bacteria such as this one.</text>
</comment>
<comment type="similarity">
    <text evidence="1">Belongs to the class-II aminoacyl-tRNA synthetase family. HisZ subfamily.</text>
</comment>
<keyword id="KW-0028">Amino-acid biosynthesis</keyword>
<keyword id="KW-0963">Cytoplasm</keyword>
<keyword id="KW-0368">Histidine biosynthesis</keyword>
<dbReference type="EMBL" id="CP001186">
    <property type="protein sequence ID" value="ACK94576.1"/>
    <property type="molecule type" value="Genomic_DNA"/>
</dbReference>
<dbReference type="RefSeq" id="WP_000170302.1">
    <property type="nucleotide sequence ID" value="NC_011772.1"/>
</dbReference>
<dbReference type="SMR" id="B7IN97"/>
<dbReference type="KEGG" id="bcg:BCG9842_B3887"/>
<dbReference type="HOGENOM" id="CLU_025113_0_0_9"/>
<dbReference type="UniPathway" id="UPA00031">
    <property type="reaction ID" value="UER00006"/>
</dbReference>
<dbReference type="Proteomes" id="UP000006744">
    <property type="component" value="Chromosome"/>
</dbReference>
<dbReference type="GO" id="GO:0005737">
    <property type="term" value="C:cytoplasm"/>
    <property type="evidence" value="ECO:0007669"/>
    <property type="project" value="UniProtKB-SubCell"/>
</dbReference>
<dbReference type="GO" id="GO:0140096">
    <property type="term" value="F:catalytic activity, acting on a protein"/>
    <property type="evidence" value="ECO:0007669"/>
    <property type="project" value="UniProtKB-ARBA"/>
</dbReference>
<dbReference type="GO" id="GO:0004821">
    <property type="term" value="F:histidine-tRNA ligase activity"/>
    <property type="evidence" value="ECO:0007669"/>
    <property type="project" value="TreeGrafter"/>
</dbReference>
<dbReference type="GO" id="GO:0016740">
    <property type="term" value="F:transferase activity"/>
    <property type="evidence" value="ECO:0007669"/>
    <property type="project" value="UniProtKB-ARBA"/>
</dbReference>
<dbReference type="GO" id="GO:0006427">
    <property type="term" value="P:histidyl-tRNA aminoacylation"/>
    <property type="evidence" value="ECO:0007669"/>
    <property type="project" value="TreeGrafter"/>
</dbReference>
<dbReference type="GO" id="GO:0000105">
    <property type="term" value="P:L-histidine biosynthetic process"/>
    <property type="evidence" value="ECO:0007669"/>
    <property type="project" value="UniProtKB-UniRule"/>
</dbReference>
<dbReference type="CDD" id="cd00773">
    <property type="entry name" value="HisRS-like_core"/>
    <property type="match status" value="1"/>
</dbReference>
<dbReference type="FunFam" id="3.30.930.10:FF:000060">
    <property type="entry name" value="ATP phosphoribosyltransferase regulatory subunit"/>
    <property type="match status" value="1"/>
</dbReference>
<dbReference type="Gene3D" id="3.30.930.10">
    <property type="entry name" value="Bira Bifunctional Protein, Domain 2"/>
    <property type="match status" value="1"/>
</dbReference>
<dbReference type="HAMAP" id="MF_00125">
    <property type="entry name" value="HisZ"/>
    <property type="match status" value="1"/>
</dbReference>
<dbReference type="InterPro" id="IPR006195">
    <property type="entry name" value="aa-tRNA-synth_II"/>
</dbReference>
<dbReference type="InterPro" id="IPR045864">
    <property type="entry name" value="aa-tRNA-synth_II/BPL/LPL"/>
</dbReference>
<dbReference type="InterPro" id="IPR041715">
    <property type="entry name" value="HisRS-like_core"/>
</dbReference>
<dbReference type="InterPro" id="IPR004516">
    <property type="entry name" value="HisRS/HisZ"/>
</dbReference>
<dbReference type="InterPro" id="IPR004517">
    <property type="entry name" value="HisZ"/>
</dbReference>
<dbReference type="NCBIfam" id="TIGR00443">
    <property type="entry name" value="hisZ_biosyn_reg"/>
    <property type="match status" value="1"/>
</dbReference>
<dbReference type="NCBIfam" id="NF008938">
    <property type="entry name" value="PRK12292.1-6"/>
    <property type="match status" value="1"/>
</dbReference>
<dbReference type="PANTHER" id="PTHR43707:SF6">
    <property type="entry name" value="ATP PHOSPHORIBOSYLTRANSFERASE REGULATORY SUBUNIT"/>
    <property type="match status" value="1"/>
</dbReference>
<dbReference type="PANTHER" id="PTHR43707">
    <property type="entry name" value="HISTIDYL-TRNA SYNTHETASE"/>
    <property type="match status" value="1"/>
</dbReference>
<dbReference type="Pfam" id="PF13393">
    <property type="entry name" value="tRNA-synt_His"/>
    <property type="match status" value="1"/>
</dbReference>
<dbReference type="PIRSF" id="PIRSF001549">
    <property type="entry name" value="His-tRNA_synth"/>
    <property type="match status" value="1"/>
</dbReference>
<dbReference type="SUPFAM" id="SSF55681">
    <property type="entry name" value="Class II aaRS and biotin synthetases"/>
    <property type="match status" value="1"/>
</dbReference>
<dbReference type="PROSITE" id="PS50862">
    <property type="entry name" value="AA_TRNA_LIGASE_II"/>
    <property type="match status" value="1"/>
</dbReference>
<sequence>MTKWKRANPNGTRDYLFEECTLIEEVEQKLRLTFLERGYEEIRTPTIEFYDVFAFQNRPIDEEKMYKFFDEKGRIIVLRPDMTIPLARVIGTQRWDTPLKVTYSGNVFRANESHSGKYNEIVQSGIEVIGIDNVRAEIECVISVIQALQKLNVQSFTIEIGQVQLYKCIVKKLSIHDEEERVLRTYIESKNYAALSNFIGEKKLDRCDETVRLLEKLPRLFGNLEVIEEAEKLASSNEMKMAIARVKEMYETMETLGYGSYISIDLGMIQHLDYYTGVIFKGYIYEIGEEIVSGGRYDELIGNFGETLPAVGLAVQVNQIVKALQEQQEPYERNQIDIVIHYELNRLAEAERLRNLLRKDGKNAWLSLFSNLSDTFQFARKNKIGTVVEAKNEYLVEYVWNEKWVVQKEGETSCVTFKLR</sequence>
<proteinExistence type="inferred from homology"/>
<accession>B7IN97</accession>
<protein>
    <recommendedName>
        <fullName evidence="1">ATP phosphoribosyltransferase regulatory subunit</fullName>
    </recommendedName>
</protein>
<evidence type="ECO:0000255" key="1">
    <source>
        <dbReference type="HAMAP-Rule" id="MF_00125"/>
    </source>
</evidence>
<organism>
    <name type="scientific">Bacillus cereus (strain G9842)</name>
    <dbReference type="NCBI Taxonomy" id="405531"/>
    <lineage>
        <taxon>Bacteria</taxon>
        <taxon>Bacillati</taxon>
        <taxon>Bacillota</taxon>
        <taxon>Bacilli</taxon>
        <taxon>Bacillales</taxon>
        <taxon>Bacillaceae</taxon>
        <taxon>Bacillus</taxon>
        <taxon>Bacillus cereus group</taxon>
    </lineage>
</organism>
<gene>
    <name evidence="1" type="primary">hisZ</name>
    <name type="ordered locus">BCG9842_B3887</name>
</gene>
<reference key="1">
    <citation type="submission" date="2008-10" db="EMBL/GenBank/DDBJ databases">
        <title>Genome sequence of Bacillus cereus G9842.</title>
        <authorList>
            <person name="Dodson R.J."/>
            <person name="Durkin A.S."/>
            <person name="Rosovitz M.J."/>
            <person name="Rasko D.A."/>
            <person name="Hoffmaster A."/>
            <person name="Ravel J."/>
            <person name="Sutton G."/>
        </authorList>
    </citation>
    <scope>NUCLEOTIDE SEQUENCE [LARGE SCALE GENOMIC DNA]</scope>
    <source>
        <strain>G9842</strain>
    </source>
</reference>
<name>HISZ_BACC2</name>